<gene>
    <name evidence="1" type="primary">rlmH</name>
    <name type="ordered locus">P9301_09231</name>
</gene>
<name>RLMH_PROM0</name>
<evidence type="ECO:0000255" key="1">
    <source>
        <dbReference type="HAMAP-Rule" id="MF_00658"/>
    </source>
</evidence>
<reference key="1">
    <citation type="journal article" date="2007" name="PLoS Genet.">
        <title>Patterns and implications of gene gain and loss in the evolution of Prochlorococcus.</title>
        <authorList>
            <person name="Kettler G.C."/>
            <person name="Martiny A.C."/>
            <person name="Huang K."/>
            <person name="Zucker J."/>
            <person name="Coleman M.L."/>
            <person name="Rodrigue S."/>
            <person name="Chen F."/>
            <person name="Lapidus A."/>
            <person name="Ferriera S."/>
            <person name="Johnson J."/>
            <person name="Steglich C."/>
            <person name="Church G.M."/>
            <person name="Richardson P."/>
            <person name="Chisholm S.W."/>
        </authorList>
    </citation>
    <scope>NUCLEOTIDE SEQUENCE [LARGE SCALE GENOMIC DNA]</scope>
    <source>
        <strain>MIT 9301</strain>
    </source>
</reference>
<sequence length="138" mass="15878">MLQSNRLAIYAIGKIKKLWIRDGINQYKKRMPELIINELKTFNLNNLRSNNNIIICLSEEGKQFNSVELCSLLLNFKNKKINFLIGDTDGVSSDIKEKSDLVLSLSPLTFPHELARLILIEQIYRAISISNNSPYHRS</sequence>
<feature type="chain" id="PRO_1000061820" description="Ribosomal RNA large subunit methyltransferase H">
    <location>
        <begin position="1"/>
        <end position="138"/>
    </location>
</feature>
<feature type="binding site" evidence="1">
    <location>
        <position position="57"/>
    </location>
    <ligand>
        <name>S-adenosyl-L-methionine</name>
        <dbReference type="ChEBI" id="CHEBI:59789"/>
    </ligand>
</feature>
<feature type="binding site" evidence="1">
    <location>
        <position position="86"/>
    </location>
    <ligand>
        <name>S-adenosyl-L-methionine</name>
        <dbReference type="ChEBI" id="CHEBI:59789"/>
    </ligand>
</feature>
<feature type="binding site" evidence="1">
    <location>
        <begin position="105"/>
        <end position="110"/>
    </location>
    <ligand>
        <name>S-adenosyl-L-methionine</name>
        <dbReference type="ChEBI" id="CHEBI:59789"/>
    </ligand>
</feature>
<proteinExistence type="inferred from homology"/>
<dbReference type="EC" id="2.1.1.177" evidence="1"/>
<dbReference type="EMBL" id="CP000576">
    <property type="protein sequence ID" value="ABO17546.1"/>
    <property type="molecule type" value="Genomic_DNA"/>
</dbReference>
<dbReference type="RefSeq" id="WP_011862894.1">
    <property type="nucleotide sequence ID" value="NC_009091.1"/>
</dbReference>
<dbReference type="SMR" id="A3PCS1"/>
<dbReference type="STRING" id="167546.P9301_09231"/>
<dbReference type="KEGG" id="pmg:P9301_09231"/>
<dbReference type="eggNOG" id="COG1576">
    <property type="taxonomic scope" value="Bacteria"/>
</dbReference>
<dbReference type="HOGENOM" id="CLU_100552_2_0_3"/>
<dbReference type="OrthoDB" id="9806643at2"/>
<dbReference type="Proteomes" id="UP000001430">
    <property type="component" value="Chromosome"/>
</dbReference>
<dbReference type="GO" id="GO:0005737">
    <property type="term" value="C:cytoplasm"/>
    <property type="evidence" value="ECO:0007669"/>
    <property type="project" value="UniProtKB-SubCell"/>
</dbReference>
<dbReference type="GO" id="GO:0070038">
    <property type="term" value="F:rRNA (pseudouridine-N3-)-methyltransferase activity"/>
    <property type="evidence" value="ECO:0007669"/>
    <property type="project" value="UniProtKB-UniRule"/>
</dbReference>
<dbReference type="CDD" id="cd18081">
    <property type="entry name" value="RlmH-like"/>
    <property type="match status" value="1"/>
</dbReference>
<dbReference type="Gene3D" id="3.40.1280.10">
    <property type="match status" value="1"/>
</dbReference>
<dbReference type="HAMAP" id="MF_00658">
    <property type="entry name" value="23SrRNA_methyltr_H"/>
    <property type="match status" value="1"/>
</dbReference>
<dbReference type="InterPro" id="IPR029028">
    <property type="entry name" value="Alpha/beta_knot_MTases"/>
</dbReference>
<dbReference type="InterPro" id="IPR003742">
    <property type="entry name" value="RlmH-like"/>
</dbReference>
<dbReference type="InterPro" id="IPR029026">
    <property type="entry name" value="tRNA_m1G_MTases_N"/>
</dbReference>
<dbReference type="PANTHER" id="PTHR33603">
    <property type="entry name" value="METHYLTRANSFERASE"/>
    <property type="match status" value="1"/>
</dbReference>
<dbReference type="PANTHER" id="PTHR33603:SF1">
    <property type="entry name" value="RIBOSOMAL RNA LARGE SUBUNIT METHYLTRANSFERASE H"/>
    <property type="match status" value="1"/>
</dbReference>
<dbReference type="Pfam" id="PF02590">
    <property type="entry name" value="SPOUT_MTase"/>
    <property type="match status" value="1"/>
</dbReference>
<dbReference type="PIRSF" id="PIRSF004505">
    <property type="entry name" value="MT_bac"/>
    <property type="match status" value="1"/>
</dbReference>
<dbReference type="SUPFAM" id="SSF75217">
    <property type="entry name" value="alpha/beta knot"/>
    <property type="match status" value="1"/>
</dbReference>
<keyword id="KW-0963">Cytoplasm</keyword>
<keyword id="KW-0489">Methyltransferase</keyword>
<keyword id="KW-1185">Reference proteome</keyword>
<keyword id="KW-0698">rRNA processing</keyword>
<keyword id="KW-0949">S-adenosyl-L-methionine</keyword>
<keyword id="KW-0808">Transferase</keyword>
<protein>
    <recommendedName>
        <fullName evidence="1">Ribosomal RNA large subunit methyltransferase H</fullName>
        <ecNumber evidence="1">2.1.1.177</ecNumber>
    </recommendedName>
    <alternativeName>
        <fullName evidence="1">23S rRNA (pseudouridine1915-N3)-methyltransferase</fullName>
    </alternativeName>
    <alternativeName>
        <fullName evidence="1">23S rRNA m3Psi1915 methyltransferase</fullName>
    </alternativeName>
    <alternativeName>
        <fullName evidence="1">rRNA (pseudouridine-N3-)-methyltransferase RlmH</fullName>
    </alternativeName>
</protein>
<organism>
    <name type="scientific">Prochlorococcus marinus (strain MIT 9301)</name>
    <dbReference type="NCBI Taxonomy" id="167546"/>
    <lineage>
        <taxon>Bacteria</taxon>
        <taxon>Bacillati</taxon>
        <taxon>Cyanobacteriota</taxon>
        <taxon>Cyanophyceae</taxon>
        <taxon>Synechococcales</taxon>
        <taxon>Prochlorococcaceae</taxon>
        <taxon>Prochlorococcus</taxon>
    </lineage>
</organism>
<accession>A3PCS1</accession>
<comment type="function">
    <text evidence="1">Specifically methylates the pseudouridine at position 1915 (m3Psi1915) in 23S rRNA.</text>
</comment>
<comment type="catalytic activity">
    <reaction evidence="1">
        <text>pseudouridine(1915) in 23S rRNA + S-adenosyl-L-methionine = N(3)-methylpseudouridine(1915) in 23S rRNA + S-adenosyl-L-homocysteine + H(+)</text>
        <dbReference type="Rhea" id="RHEA:42752"/>
        <dbReference type="Rhea" id="RHEA-COMP:10221"/>
        <dbReference type="Rhea" id="RHEA-COMP:10222"/>
        <dbReference type="ChEBI" id="CHEBI:15378"/>
        <dbReference type="ChEBI" id="CHEBI:57856"/>
        <dbReference type="ChEBI" id="CHEBI:59789"/>
        <dbReference type="ChEBI" id="CHEBI:65314"/>
        <dbReference type="ChEBI" id="CHEBI:74486"/>
        <dbReference type="EC" id="2.1.1.177"/>
    </reaction>
</comment>
<comment type="subunit">
    <text evidence="1">Homodimer.</text>
</comment>
<comment type="subcellular location">
    <subcellularLocation>
        <location evidence="1">Cytoplasm</location>
    </subcellularLocation>
</comment>
<comment type="similarity">
    <text evidence="1">Belongs to the RNA methyltransferase RlmH family.</text>
</comment>